<sequence>MVDMTQLQAIYGGTFDPVHYGHLKPVEILANQIGLSKVIIMPNNVPPHRPQPEATSAQRVHMLKLAIADKPLFTLDERELRRDTPSWTAQTLQEWRQEQGPRKPLAFIIGQDSLLTFPTWHNYETILDNVHLIVCRRPGYPLTMAQEADQRWLDRHLTHDVESLHNSPSGVIYLAETPWFDISATIIRQRLERGESCAEMLPAAVLDYIREQGLYC</sequence>
<proteinExistence type="inferred from homology"/>
<comment type="function">
    <text evidence="1">Catalyzes the reversible adenylation of nicotinate mononucleotide (NaMN) to nicotinic acid adenine dinucleotide (NaAD).</text>
</comment>
<comment type="catalytic activity">
    <reaction evidence="1">
        <text>nicotinate beta-D-ribonucleotide + ATP + H(+) = deamido-NAD(+) + diphosphate</text>
        <dbReference type="Rhea" id="RHEA:22860"/>
        <dbReference type="ChEBI" id="CHEBI:15378"/>
        <dbReference type="ChEBI" id="CHEBI:30616"/>
        <dbReference type="ChEBI" id="CHEBI:33019"/>
        <dbReference type="ChEBI" id="CHEBI:57502"/>
        <dbReference type="ChEBI" id="CHEBI:58437"/>
        <dbReference type="EC" id="2.7.7.18"/>
    </reaction>
</comment>
<comment type="pathway">
    <text evidence="1">Cofactor biosynthesis; NAD(+) biosynthesis; deamido-NAD(+) from nicotinate D-ribonucleotide: step 1/1.</text>
</comment>
<comment type="similarity">
    <text evidence="1">Belongs to the NadD family.</text>
</comment>
<accession>A6T6A0</accession>
<reference key="1">
    <citation type="submission" date="2006-09" db="EMBL/GenBank/DDBJ databases">
        <authorList>
            <consortium name="The Klebsiella pneumonia Genome Sequencing Project"/>
            <person name="McClelland M."/>
            <person name="Sanderson E.K."/>
            <person name="Spieth J."/>
            <person name="Clifton W.S."/>
            <person name="Latreille P."/>
            <person name="Sabo A."/>
            <person name="Pepin K."/>
            <person name="Bhonagiri V."/>
            <person name="Porwollik S."/>
            <person name="Ali J."/>
            <person name="Wilson R.K."/>
        </authorList>
    </citation>
    <scope>NUCLEOTIDE SEQUENCE [LARGE SCALE GENOMIC DNA]</scope>
    <source>
        <strain>ATCC 700721 / MGH 78578</strain>
    </source>
</reference>
<evidence type="ECO:0000255" key="1">
    <source>
        <dbReference type="HAMAP-Rule" id="MF_00244"/>
    </source>
</evidence>
<organism>
    <name type="scientific">Klebsiella pneumoniae subsp. pneumoniae (strain ATCC 700721 / MGH 78578)</name>
    <dbReference type="NCBI Taxonomy" id="272620"/>
    <lineage>
        <taxon>Bacteria</taxon>
        <taxon>Pseudomonadati</taxon>
        <taxon>Pseudomonadota</taxon>
        <taxon>Gammaproteobacteria</taxon>
        <taxon>Enterobacterales</taxon>
        <taxon>Enterobacteriaceae</taxon>
        <taxon>Klebsiella/Raoultella group</taxon>
        <taxon>Klebsiella</taxon>
        <taxon>Klebsiella pneumoniae complex</taxon>
    </lineage>
</organism>
<name>NADD_KLEP7</name>
<protein>
    <recommendedName>
        <fullName evidence="1">Probable nicotinate-nucleotide adenylyltransferase</fullName>
        <ecNumber evidence="1">2.7.7.18</ecNumber>
    </recommendedName>
    <alternativeName>
        <fullName evidence="1">Deamido-NAD(+) diphosphorylase</fullName>
    </alternativeName>
    <alternativeName>
        <fullName evidence="1">Deamido-NAD(+) pyrophosphorylase</fullName>
    </alternativeName>
    <alternativeName>
        <fullName evidence="1">Nicotinate mononucleotide adenylyltransferase</fullName>
        <shortName evidence="1">NaMN adenylyltransferase</shortName>
    </alternativeName>
</protein>
<keyword id="KW-0067">ATP-binding</keyword>
<keyword id="KW-0520">NAD</keyword>
<keyword id="KW-0547">Nucleotide-binding</keyword>
<keyword id="KW-0548">Nucleotidyltransferase</keyword>
<keyword id="KW-0662">Pyridine nucleotide biosynthesis</keyword>
<keyword id="KW-0808">Transferase</keyword>
<dbReference type="EC" id="2.7.7.18" evidence="1"/>
<dbReference type="EMBL" id="CP000647">
    <property type="protein sequence ID" value="ABR76121.1"/>
    <property type="molecule type" value="Genomic_DNA"/>
</dbReference>
<dbReference type="RefSeq" id="WP_012068451.1">
    <property type="nucleotide sequence ID" value="NC_009648.1"/>
</dbReference>
<dbReference type="SMR" id="A6T6A0"/>
<dbReference type="STRING" id="272620.KPN_00671"/>
<dbReference type="PaxDb" id="272620-KPN_00671"/>
<dbReference type="EnsemblBacteria" id="ABR76121">
    <property type="protein sequence ID" value="ABR76121"/>
    <property type="gene ID" value="KPN_00671"/>
</dbReference>
<dbReference type="KEGG" id="kpn:KPN_00671"/>
<dbReference type="HOGENOM" id="CLU_069765_0_0_6"/>
<dbReference type="UniPathway" id="UPA00253">
    <property type="reaction ID" value="UER00332"/>
</dbReference>
<dbReference type="Proteomes" id="UP000000265">
    <property type="component" value="Chromosome"/>
</dbReference>
<dbReference type="GO" id="GO:0005524">
    <property type="term" value="F:ATP binding"/>
    <property type="evidence" value="ECO:0007669"/>
    <property type="project" value="UniProtKB-KW"/>
</dbReference>
<dbReference type="GO" id="GO:0004515">
    <property type="term" value="F:nicotinate-nucleotide adenylyltransferase activity"/>
    <property type="evidence" value="ECO:0007669"/>
    <property type="project" value="UniProtKB-UniRule"/>
</dbReference>
<dbReference type="GO" id="GO:0009435">
    <property type="term" value="P:NAD biosynthetic process"/>
    <property type="evidence" value="ECO:0007669"/>
    <property type="project" value="UniProtKB-UniRule"/>
</dbReference>
<dbReference type="CDD" id="cd02165">
    <property type="entry name" value="NMNAT"/>
    <property type="match status" value="1"/>
</dbReference>
<dbReference type="FunFam" id="3.40.50.620:FF:000039">
    <property type="entry name" value="Probable nicotinate-nucleotide adenylyltransferase"/>
    <property type="match status" value="1"/>
</dbReference>
<dbReference type="Gene3D" id="3.40.50.620">
    <property type="entry name" value="HUPs"/>
    <property type="match status" value="1"/>
</dbReference>
<dbReference type="HAMAP" id="MF_00244">
    <property type="entry name" value="NaMN_adenylyltr"/>
    <property type="match status" value="1"/>
</dbReference>
<dbReference type="InterPro" id="IPR004821">
    <property type="entry name" value="Cyt_trans-like"/>
</dbReference>
<dbReference type="InterPro" id="IPR005248">
    <property type="entry name" value="NadD/NMNAT"/>
</dbReference>
<dbReference type="InterPro" id="IPR014729">
    <property type="entry name" value="Rossmann-like_a/b/a_fold"/>
</dbReference>
<dbReference type="NCBIfam" id="TIGR00125">
    <property type="entry name" value="cyt_tran_rel"/>
    <property type="match status" value="1"/>
</dbReference>
<dbReference type="NCBIfam" id="TIGR00482">
    <property type="entry name" value="nicotinate (nicotinamide) nucleotide adenylyltransferase"/>
    <property type="match status" value="1"/>
</dbReference>
<dbReference type="NCBIfam" id="NF000839">
    <property type="entry name" value="PRK00071.1-1"/>
    <property type="match status" value="1"/>
</dbReference>
<dbReference type="PANTHER" id="PTHR39321">
    <property type="entry name" value="NICOTINATE-NUCLEOTIDE ADENYLYLTRANSFERASE-RELATED"/>
    <property type="match status" value="1"/>
</dbReference>
<dbReference type="PANTHER" id="PTHR39321:SF3">
    <property type="entry name" value="PHOSPHOPANTETHEINE ADENYLYLTRANSFERASE"/>
    <property type="match status" value="1"/>
</dbReference>
<dbReference type="Pfam" id="PF01467">
    <property type="entry name" value="CTP_transf_like"/>
    <property type="match status" value="1"/>
</dbReference>
<dbReference type="SUPFAM" id="SSF52374">
    <property type="entry name" value="Nucleotidylyl transferase"/>
    <property type="match status" value="1"/>
</dbReference>
<gene>
    <name evidence="1" type="primary">nadD</name>
    <name type="ordered locus">KPN78578_06600</name>
    <name type="ORF">KPN_00671</name>
</gene>
<feature type="chain" id="PRO_0000336699" description="Probable nicotinate-nucleotide adenylyltransferase">
    <location>
        <begin position="1"/>
        <end position="216"/>
    </location>
</feature>